<proteinExistence type="inferred from homology"/>
<keyword id="KW-0004">4Fe-4S</keyword>
<keyword id="KW-0028">Amino-acid biosynthesis</keyword>
<keyword id="KW-0100">Branched-chain amino acid biosynthesis</keyword>
<keyword id="KW-0408">Iron</keyword>
<keyword id="KW-0411">Iron-sulfur</keyword>
<keyword id="KW-0432">Leucine biosynthesis</keyword>
<keyword id="KW-0456">Lyase</keyword>
<keyword id="KW-0479">Metal-binding</keyword>
<keyword id="KW-1185">Reference proteome</keyword>
<evidence type="ECO:0000255" key="1">
    <source>
        <dbReference type="HAMAP-Rule" id="MF_01027"/>
    </source>
</evidence>
<reference key="1">
    <citation type="journal article" date="2008" name="Proc. Natl. Acad. Sci. U.S.A.">
        <title>The genome of Clostridium kluyveri, a strict anaerobe with unique metabolic features.</title>
        <authorList>
            <person name="Seedorf H."/>
            <person name="Fricke W.F."/>
            <person name="Veith B."/>
            <person name="Brueggemann H."/>
            <person name="Liesegang H."/>
            <person name="Strittmatter A."/>
            <person name="Miethke M."/>
            <person name="Buckel W."/>
            <person name="Hinderberger J."/>
            <person name="Li F."/>
            <person name="Hagemeier C."/>
            <person name="Thauer R.K."/>
            <person name="Gottschalk G."/>
        </authorList>
    </citation>
    <scope>NUCLEOTIDE SEQUENCE [LARGE SCALE GENOMIC DNA]</scope>
    <source>
        <strain>ATCC 8527 / DSM 555 / NBRC 12016 / NCIMB 10680 / K1</strain>
    </source>
</reference>
<comment type="function">
    <text evidence="1">Catalyzes the isomerization between 2-isopropylmalate and 3-isopropylmalate, via the formation of 2-isopropylmaleate.</text>
</comment>
<comment type="catalytic activity">
    <reaction evidence="1">
        <text>(2R,3S)-3-isopropylmalate = (2S)-2-isopropylmalate</text>
        <dbReference type="Rhea" id="RHEA:32287"/>
        <dbReference type="ChEBI" id="CHEBI:1178"/>
        <dbReference type="ChEBI" id="CHEBI:35121"/>
        <dbReference type="EC" id="4.2.1.33"/>
    </reaction>
</comment>
<comment type="cofactor">
    <cofactor evidence="1">
        <name>[4Fe-4S] cluster</name>
        <dbReference type="ChEBI" id="CHEBI:49883"/>
    </cofactor>
    <text evidence="1">Binds 1 [4Fe-4S] cluster per subunit.</text>
</comment>
<comment type="pathway">
    <text evidence="1">Amino-acid biosynthesis; L-leucine biosynthesis; L-leucine from 3-methyl-2-oxobutanoate: step 2/4.</text>
</comment>
<comment type="subunit">
    <text evidence="1">Heterodimer of LeuC and LeuD.</text>
</comment>
<comment type="similarity">
    <text evidence="1">Belongs to the aconitase/IPM isomerase family. LeuC type 2 subfamily.</text>
</comment>
<accession>A5MZ75</accession>
<organism>
    <name type="scientific">Clostridium kluyveri (strain ATCC 8527 / DSM 555 / NBRC 12016 / NCIMB 10680 / K1)</name>
    <dbReference type="NCBI Taxonomy" id="431943"/>
    <lineage>
        <taxon>Bacteria</taxon>
        <taxon>Bacillati</taxon>
        <taxon>Bacillota</taxon>
        <taxon>Clostridia</taxon>
        <taxon>Eubacteriales</taxon>
        <taxon>Clostridiaceae</taxon>
        <taxon>Clostridium</taxon>
    </lineage>
</organism>
<feature type="chain" id="PRO_1000084236" description="3-isopropylmalate dehydratase large subunit">
    <location>
        <begin position="1"/>
        <end position="420"/>
    </location>
</feature>
<feature type="binding site" evidence="1">
    <location>
        <position position="300"/>
    </location>
    <ligand>
        <name>[4Fe-4S] cluster</name>
        <dbReference type="ChEBI" id="CHEBI:49883"/>
    </ligand>
</feature>
<feature type="binding site" evidence="1">
    <location>
        <position position="360"/>
    </location>
    <ligand>
        <name>[4Fe-4S] cluster</name>
        <dbReference type="ChEBI" id="CHEBI:49883"/>
    </ligand>
</feature>
<feature type="binding site" evidence="1">
    <location>
        <position position="363"/>
    </location>
    <ligand>
        <name>[4Fe-4S] cluster</name>
        <dbReference type="ChEBI" id="CHEBI:49883"/>
    </ligand>
</feature>
<sequence length="420" mass="45013">MAMTMTQKILASHAGLDSVKSGELIKVKLDLVLGNDITTPVAINEFNKIGSNKVFHKEKVAIVPDHFTPNKDIKSAEQCKCVREFAKDKDIKNYFEIGQMGIEHALIPEKGLAVCGDVIIGADSHTCTYGALGAFSTGVGSTDMAAGMATGEAWFKVPEAIKFVLNGKLSPWVSGKDIILHIIGMIGVDGALYNSMEFTGEGVGELSMDDRFTIANMAIEAGAKNGIFPVDEKTIEYVKEHSNRSYTVYEADEDAEYVKTIEIDLSKIPPTVAFPHIPENTRTIDEVGEIKIDQVVIGSCTNGRIGDLRVAAKVLKGRKVNSNVRTIIFPATQSIYLQAMKEGLLEIFIESGAVVSTPTCGPCLGGHMGILAKGERAVATTNRNFTGRMGHVESEVYLASPAVAAASAVTGKISSPEEVV</sequence>
<gene>
    <name evidence="1" type="primary">leuC</name>
    <name type="ordered locus">CKL_2159</name>
</gene>
<name>LEUC_CLOK5</name>
<protein>
    <recommendedName>
        <fullName evidence="1">3-isopropylmalate dehydratase large subunit</fullName>
        <ecNumber evidence="1">4.2.1.33</ecNumber>
    </recommendedName>
    <alternativeName>
        <fullName evidence="1">Alpha-IPM isomerase</fullName>
        <shortName evidence="1">IPMI</shortName>
    </alternativeName>
    <alternativeName>
        <fullName evidence="1">Isopropylmalate isomerase</fullName>
    </alternativeName>
</protein>
<dbReference type="EC" id="4.2.1.33" evidence="1"/>
<dbReference type="EMBL" id="CP000673">
    <property type="protein sequence ID" value="EDK34171.1"/>
    <property type="molecule type" value="Genomic_DNA"/>
</dbReference>
<dbReference type="RefSeq" id="WP_012102498.1">
    <property type="nucleotide sequence ID" value="NC_009706.1"/>
</dbReference>
<dbReference type="SMR" id="A5MZ75"/>
<dbReference type="STRING" id="431943.CKL_2159"/>
<dbReference type="KEGG" id="ckl:CKL_2159"/>
<dbReference type="eggNOG" id="COG0065">
    <property type="taxonomic scope" value="Bacteria"/>
</dbReference>
<dbReference type="HOGENOM" id="CLU_006714_3_4_9"/>
<dbReference type="UniPathway" id="UPA00048">
    <property type="reaction ID" value="UER00071"/>
</dbReference>
<dbReference type="Proteomes" id="UP000002411">
    <property type="component" value="Chromosome"/>
</dbReference>
<dbReference type="GO" id="GO:0003861">
    <property type="term" value="F:3-isopropylmalate dehydratase activity"/>
    <property type="evidence" value="ECO:0007669"/>
    <property type="project" value="UniProtKB-UniRule"/>
</dbReference>
<dbReference type="GO" id="GO:0051539">
    <property type="term" value="F:4 iron, 4 sulfur cluster binding"/>
    <property type="evidence" value="ECO:0007669"/>
    <property type="project" value="UniProtKB-KW"/>
</dbReference>
<dbReference type="GO" id="GO:0046872">
    <property type="term" value="F:metal ion binding"/>
    <property type="evidence" value="ECO:0007669"/>
    <property type="project" value="UniProtKB-KW"/>
</dbReference>
<dbReference type="GO" id="GO:0009098">
    <property type="term" value="P:L-leucine biosynthetic process"/>
    <property type="evidence" value="ECO:0007669"/>
    <property type="project" value="UniProtKB-UniRule"/>
</dbReference>
<dbReference type="CDD" id="cd01583">
    <property type="entry name" value="IPMI"/>
    <property type="match status" value="1"/>
</dbReference>
<dbReference type="Gene3D" id="3.30.499.10">
    <property type="entry name" value="Aconitase, domain 3"/>
    <property type="match status" value="2"/>
</dbReference>
<dbReference type="HAMAP" id="MF_01027">
    <property type="entry name" value="LeuC_type2"/>
    <property type="match status" value="1"/>
</dbReference>
<dbReference type="InterPro" id="IPR015931">
    <property type="entry name" value="Acnase/IPM_dHydase_lsu_aba_1/3"/>
</dbReference>
<dbReference type="InterPro" id="IPR001030">
    <property type="entry name" value="Acoase/IPM_deHydtase_lsu_aba"/>
</dbReference>
<dbReference type="InterPro" id="IPR018136">
    <property type="entry name" value="Aconitase_4Fe-4S_BS"/>
</dbReference>
<dbReference type="InterPro" id="IPR036008">
    <property type="entry name" value="Aconitase_4Fe-4S_dom"/>
</dbReference>
<dbReference type="InterPro" id="IPR011826">
    <property type="entry name" value="HAcnase/IPMdehydase_lsu_prok"/>
</dbReference>
<dbReference type="InterPro" id="IPR006251">
    <property type="entry name" value="Homoacnase/IPMdehydase_lsu"/>
</dbReference>
<dbReference type="InterPro" id="IPR050067">
    <property type="entry name" value="IPM_dehydratase_rel_enz"/>
</dbReference>
<dbReference type="InterPro" id="IPR033941">
    <property type="entry name" value="IPMI_cat"/>
</dbReference>
<dbReference type="InterPro" id="IPR011823">
    <property type="entry name" value="IsopropMal_deHydtase_lsu_bac"/>
</dbReference>
<dbReference type="NCBIfam" id="TIGR01343">
    <property type="entry name" value="hacA_fam"/>
    <property type="match status" value="1"/>
</dbReference>
<dbReference type="NCBIfam" id="TIGR02086">
    <property type="entry name" value="IPMI_arch"/>
    <property type="match status" value="1"/>
</dbReference>
<dbReference type="NCBIfam" id="TIGR02083">
    <property type="entry name" value="LEU2"/>
    <property type="match status" value="1"/>
</dbReference>
<dbReference type="NCBIfam" id="NF001614">
    <property type="entry name" value="PRK00402.1"/>
    <property type="match status" value="1"/>
</dbReference>
<dbReference type="PANTHER" id="PTHR43822:SF16">
    <property type="entry name" value="3-ISOPROPYLMALATE DEHYDRATASE LARGE SUBUNIT 2"/>
    <property type="match status" value="1"/>
</dbReference>
<dbReference type="PANTHER" id="PTHR43822">
    <property type="entry name" value="HOMOACONITASE, MITOCHONDRIAL-RELATED"/>
    <property type="match status" value="1"/>
</dbReference>
<dbReference type="Pfam" id="PF00330">
    <property type="entry name" value="Aconitase"/>
    <property type="match status" value="2"/>
</dbReference>
<dbReference type="PRINTS" id="PR00415">
    <property type="entry name" value="ACONITASE"/>
</dbReference>
<dbReference type="SUPFAM" id="SSF53732">
    <property type="entry name" value="Aconitase iron-sulfur domain"/>
    <property type="match status" value="1"/>
</dbReference>
<dbReference type="PROSITE" id="PS00450">
    <property type="entry name" value="ACONITASE_1"/>
    <property type="match status" value="1"/>
</dbReference>
<dbReference type="PROSITE" id="PS01244">
    <property type="entry name" value="ACONITASE_2"/>
    <property type="match status" value="1"/>
</dbReference>